<reference key="1">
    <citation type="journal article" date="2005" name="J. Bacteriol.">
        <title>Insights into genome plasticity and pathogenicity of the plant pathogenic Bacterium Xanthomonas campestris pv. vesicatoria revealed by the complete genome sequence.</title>
        <authorList>
            <person name="Thieme F."/>
            <person name="Koebnik R."/>
            <person name="Bekel T."/>
            <person name="Berger C."/>
            <person name="Boch J."/>
            <person name="Buettner D."/>
            <person name="Caldana C."/>
            <person name="Gaigalat L."/>
            <person name="Goesmann A."/>
            <person name="Kay S."/>
            <person name="Kirchner O."/>
            <person name="Lanz C."/>
            <person name="Linke B."/>
            <person name="McHardy A.C."/>
            <person name="Meyer F."/>
            <person name="Mittenhuber G."/>
            <person name="Nies D.H."/>
            <person name="Niesbach-Kloesgen U."/>
            <person name="Patschkowski T."/>
            <person name="Rueckert C."/>
            <person name="Rupp O."/>
            <person name="Schneiker S."/>
            <person name="Schuster S.C."/>
            <person name="Vorhoelter F.J."/>
            <person name="Weber E."/>
            <person name="Puehler A."/>
            <person name="Bonas U."/>
            <person name="Bartels D."/>
            <person name="Kaiser O."/>
        </authorList>
    </citation>
    <scope>NUCLEOTIDE SEQUENCE [LARGE SCALE GENOMIC DNA]</scope>
    <source>
        <strain>85-10</strain>
    </source>
</reference>
<name>LEU3_XANE5</name>
<keyword id="KW-0028">Amino-acid biosynthesis</keyword>
<keyword id="KW-0100">Branched-chain amino acid biosynthesis</keyword>
<keyword id="KW-0963">Cytoplasm</keyword>
<keyword id="KW-0432">Leucine biosynthesis</keyword>
<keyword id="KW-0460">Magnesium</keyword>
<keyword id="KW-0464">Manganese</keyword>
<keyword id="KW-0479">Metal-binding</keyword>
<keyword id="KW-0520">NAD</keyword>
<keyword id="KW-0560">Oxidoreductase</keyword>
<sequence length="357" mass="38219">MSKQILILPGDGIGPEIMAEAVKVLKRIDAQHGLGFELVYDELGGAAYDKYGSPLADETLERARAADAVLLGAVGGPQWDTIDPSLRPERGLLKIRSQLGLFANLRPALLYPQLADASTLKPEVVAGLDLLILRELTGGIYFGQPRGNRTLDNGERQAYDTLPYSESEIRRIAKAGFEMARLRGKKLCSVDKANVLASSQLWRAVVEEVAKDYPDIALSHMYVDNAAMQLVRAPKQFDVIVTDNMFGDILSDQASMLTGSIGMLPSASLDANSKGMYEPCHGSAPDIAGKGIANPLATILSVAMMLRYTFAQADAADAIERAVGKVLDQGLRTADIWSEGTTKVGTVAMGDAVVAAL</sequence>
<feature type="chain" id="PRO_0000083787" description="3-isopropylmalate dehydrogenase">
    <location>
        <begin position="1"/>
        <end position="357"/>
    </location>
</feature>
<feature type="binding site" evidence="1">
    <location>
        <begin position="76"/>
        <end position="89"/>
    </location>
    <ligand>
        <name>NAD(+)</name>
        <dbReference type="ChEBI" id="CHEBI:57540"/>
    </ligand>
</feature>
<feature type="binding site" evidence="1">
    <location>
        <position position="96"/>
    </location>
    <ligand>
        <name>substrate</name>
    </ligand>
</feature>
<feature type="binding site" evidence="1">
    <location>
        <position position="106"/>
    </location>
    <ligand>
        <name>substrate</name>
    </ligand>
</feature>
<feature type="binding site" evidence="1">
    <location>
        <position position="134"/>
    </location>
    <ligand>
        <name>substrate</name>
    </ligand>
</feature>
<feature type="binding site" evidence="1">
    <location>
        <position position="224"/>
    </location>
    <ligand>
        <name>Mg(2+)</name>
        <dbReference type="ChEBI" id="CHEBI:18420"/>
    </ligand>
</feature>
<feature type="binding site" evidence="1">
    <location>
        <position position="224"/>
    </location>
    <ligand>
        <name>substrate</name>
    </ligand>
</feature>
<feature type="binding site" evidence="1">
    <location>
        <position position="248"/>
    </location>
    <ligand>
        <name>Mg(2+)</name>
        <dbReference type="ChEBI" id="CHEBI:18420"/>
    </ligand>
</feature>
<feature type="binding site" evidence="1">
    <location>
        <position position="252"/>
    </location>
    <ligand>
        <name>Mg(2+)</name>
        <dbReference type="ChEBI" id="CHEBI:18420"/>
    </ligand>
</feature>
<feature type="binding site" evidence="1">
    <location>
        <begin position="282"/>
        <end position="294"/>
    </location>
    <ligand>
        <name>NAD(+)</name>
        <dbReference type="ChEBI" id="CHEBI:57540"/>
    </ligand>
</feature>
<feature type="site" description="Important for catalysis" evidence="1">
    <location>
        <position position="141"/>
    </location>
</feature>
<feature type="site" description="Important for catalysis" evidence="1">
    <location>
        <position position="192"/>
    </location>
</feature>
<protein>
    <recommendedName>
        <fullName evidence="1">3-isopropylmalate dehydrogenase</fullName>
        <ecNumber evidence="1">1.1.1.85</ecNumber>
    </recommendedName>
    <alternativeName>
        <fullName evidence="1">3-IPM-DH</fullName>
    </alternativeName>
    <alternativeName>
        <fullName evidence="1">Beta-IPM dehydrogenase</fullName>
        <shortName evidence="1">IMDH</shortName>
    </alternativeName>
</protein>
<gene>
    <name evidence="1" type="primary">leuB</name>
    <name type="ordered locus">XCV3584</name>
</gene>
<evidence type="ECO:0000255" key="1">
    <source>
        <dbReference type="HAMAP-Rule" id="MF_01033"/>
    </source>
</evidence>
<comment type="function">
    <text evidence="1">Catalyzes the oxidation of 3-carboxy-2-hydroxy-4-methylpentanoate (3-isopropylmalate) to 3-carboxy-4-methyl-2-oxopentanoate. The product decarboxylates to 4-methyl-2 oxopentanoate.</text>
</comment>
<comment type="catalytic activity">
    <reaction evidence="1">
        <text>(2R,3S)-3-isopropylmalate + NAD(+) = 4-methyl-2-oxopentanoate + CO2 + NADH</text>
        <dbReference type="Rhea" id="RHEA:32271"/>
        <dbReference type="ChEBI" id="CHEBI:16526"/>
        <dbReference type="ChEBI" id="CHEBI:17865"/>
        <dbReference type="ChEBI" id="CHEBI:35121"/>
        <dbReference type="ChEBI" id="CHEBI:57540"/>
        <dbReference type="ChEBI" id="CHEBI:57945"/>
        <dbReference type="EC" id="1.1.1.85"/>
    </reaction>
</comment>
<comment type="cofactor">
    <cofactor evidence="1">
        <name>Mg(2+)</name>
        <dbReference type="ChEBI" id="CHEBI:18420"/>
    </cofactor>
    <cofactor evidence="1">
        <name>Mn(2+)</name>
        <dbReference type="ChEBI" id="CHEBI:29035"/>
    </cofactor>
    <text evidence="1">Binds 1 Mg(2+) or Mn(2+) ion per subunit.</text>
</comment>
<comment type="pathway">
    <text evidence="1">Amino-acid biosynthesis; L-leucine biosynthesis; L-leucine from 3-methyl-2-oxobutanoate: step 3/4.</text>
</comment>
<comment type="subunit">
    <text evidence="1">Homodimer.</text>
</comment>
<comment type="subcellular location">
    <subcellularLocation>
        <location evidence="1">Cytoplasm</location>
    </subcellularLocation>
</comment>
<comment type="similarity">
    <text evidence="1">Belongs to the isocitrate and isopropylmalate dehydrogenases family. LeuB type 1 subfamily.</text>
</comment>
<organism>
    <name type="scientific">Xanthomonas euvesicatoria pv. vesicatoria (strain 85-10)</name>
    <name type="common">Xanthomonas campestris pv. vesicatoria</name>
    <dbReference type="NCBI Taxonomy" id="316273"/>
    <lineage>
        <taxon>Bacteria</taxon>
        <taxon>Pseudomonadati</taxon>
        <taxon>Pseudomonadota</taxon>
        <taxon>Gammaproteobacteria</taxon>
        <taxon>Lysobacterales</taxon>
        <taxon>Lysobacteraceae</taxon>
        <taxon>Xanthomonas</taxon>
    </lineage>
</organism>
<accession>Q3BPJ8</accession>
<proteinExistence type="inferred from homology"/>
<dbReference type="EC" id="1.1.1.85" evidence="1"/>
<dbReference type="EMBL" id="AM039952">
    <property type="protein sequence ID" value="CAJ25315.1"/>
    <property type="molecule type" value="Genomic_DNA"/>
</dbReference>
<dbReference type="RefSeq" id="WP_011348522.1">
    <property type="nucleotide sequence ID" value="NZ_CP017190.1"/>
</dbReference>
<dbReference type="SMR" id="Q3BPJ8"/>
<dbReference type="STRING" id="456327.BJD11_04795"/>
<dbReference type="KEGG" id="xcv:XCV3584"/>
<dbReference type="eggNOG" id="COG0473">
    <property type="taxonomic scope" value="Bacteria"/>
</dbReference>
<dbReference type="HOGENOM" id="CLU_031953_0_3_6"/>
<dbReference type="UniPathway" id="UPA00048">
    <property type="reaction ID" value="UER00072"/>
</dbReference>
<dbReference type="Proteomes" id="UP000007069">
    <property type="component" value="Chromosome"/>
</dbReference>
<dbReference type="GO" id="GO:0005829">
    <property type="term" value="C:cytosol"/>
    <property type="evidence" value="ECO:0007669"/>
    <property type="project" value="TreeGrafter"/>
</dbReference>
<dbReference type="GO" id="GO:0003862">
    <property type="term" value="F:3-isopropylmalate dehydrogenase activity"/>
    <property type="evidence" value="ECO:0007669"/>
    <property type="project" value="UniProtKB-UniRule"/>
</dbReference>
<dbReference type="GO" id="GO:0000287">
    <property type="term" value="F:magnesium ion binding"/>
    <property type="evidence" value="ECO:0007669"/>
    <property type="project" value="InterPro"/>
</dbReference>
<dbReference type="GO" id="GO:0051287">
    <property type="term" value="F:NAD binding"/>
    <property type="evidence" value="ECO:0007669"/>
    <property type="project" value="InterPro"/>
</dbReference>
<dbReference type="GO" id="GO:0009098">
    <property type="term" value="P:L-leucine biosynthetic process"/>
    <property type="evidence" value="ECO:0007669"/>
    <property type="project" value="UniProtKB-UniRule"/>
</dbReference>
<dbReference type="FunFam" id="3.40.718.10:FF:000004">
    <property type="entry name" value="3-isopropylmalate dehydrogenase"/>
    <property type="match status" value="1"/>
</dbReference>
<dbReference type="Gene3D" id="3.40.718.10">
    <property type="entry name" value="Isopropylmalate Dehydrogenase"/>
    <property type="match status" value="1"/>
</dbReference>
<dbReference type="HAMAP" id="MF_01033">
    <property type="entry name" value="LeuB_type1"/>
    <property type="match status" value="1"/>
</dbReference>
<dbReference type="InterPro" id="IPR019818">
    <property type="entry name" value="IsoCit/isopropylmalate_DH_CS"/>
</dbReference>
<dbReference type="InterPro" id="IPR024084">
    <property type="entry name" value="IsoPropMal-DH-like_dom"/>
</dbReference>
<dbReference type="InterPro" id="IPR004429">
    <property type="entry name" value="Isopropylmalate_DH"/>
</dbReference>
<dbReference type="NCBIfam" id="TIGR00169">
    <property type="entry name" value="leuB"/>
    <property type="match status" value="1"/>
</dbReference>
<dbReference type="PANTHER" id="PTHR42979">
    <property type="entry name" value="3-ISOPROPYLMALATE DEHYDROGENASE"/>
    <property type="match status" value="1"/>
</dbReference>
<dbReference type="PANTHER" id="PTHR42979:SF1">
    <property type="entry name" value="3-ISOPROPYLMALATE DEHYDROGENASE"/>
    <property type="match status" value="1"/>
</dbReference>
<dbReference type="Pfam" id="PF00180">
    <property type="entry name" value="Iso_dh"/>
    <property type="match status" value="1"/>
</dbReference>
<dbReference type="SMART" id="SM01329">
    <property type="entry name" value="Iso_dh"/>
    <property type="match status" value="1"/>
</dbReference>
<dbReference type="SUPFAM" id="SSF53659">
    <property type="entry name" value="Isocitrate/Isopropylmalate dehydrogenase-like"/>
    <property type="match status" value="1"/>
</dbReference>
<dbReference type="PROSITE" id="PS00470">
    <property type="entry name" value="IDH_IMDH"/>
    <property type="match status" value="1"/>
</dbReference>